<gene>
    <name type="primary">dacD</name>
    <name type="synonym">phsE</name>
    <name type="synonym">phsF</name>
    <name type="ordered locus">STM2062</name>
</gene>
<keyword id="KW-0121">Carboxypeptidase</keyword>
<keyword id="KW-0997">Cell inner membrane</keyword>
<keyword id="KW-1003">Cell membrane</keyword>
<keyword id="KW-0133">Cell shape</keyword>
<keyword id="KW-0961">Cell wall biogenesis/degradation</keyword>
<keyword id="KW-0378">Hydrolase</keyword>
<keyword id="KW-0472">Membrane</keyword>
<keyword id="KW-0573">Peptidoglycan synthesis</keyword>
<keyword id="KW-0645">Protease</keyword>
<keyword id="KW-1185">Reference proteome</keyword>
<keyword id="KW-0732">Signal</keyword>
<feature type="signal peptide" evidence="2">
    <location>
        <begin position="1"/>
        <end position="23"/>
    </location>
</feature>
<feature type="chain" id="PRO_0000027235" description="D-alanyl-D-alanine carboxypeptidase DacD">
    <location>
        <begin position="24"/>
        <end position="390"/>
    </location>
</feature>
<feature type="active site" description="Acyl-ester intermediate" evidence="1">
    <location>
        <position position="65"/>
    </location>
</feature>
<feature type="active site" description="Proton acceptor" evidence="1">
    <location>
        <position position="68"/>
    </location>
</feature>
<feature type="active site" evidence="1">
    <location>
        <position position="131"/>
    </location>
</feature>
<feature type="binding site" evidence="1">
    <location>
        <position position="234"/>
    </location>
    <ligand>
        <name>substrate</name>
    </ligand>
</feature>
<proteinExistence type="inferred from homology"/>
<reference key="1">
    <citation type="journal article" date="1995" name="Gene">
        <title>Cloning and characterization of a gene cluster, phsBCDEF, necessary for the production of hydrogen sulfide from thiosulfate by Salmonella typhimurium.</title>
        <authorList>
            <person name="Alami N."/>
            <person name="Hallenbeck P.C."/>
        </authorList>
    </citation>
    <scope>NUCLEOTIDE SEQUENCE [GENOMIC DNA]</scope>
    <source>
        <strain>LT2</strain>
    </source>
</reference>
<reference key="2">
    <citation type="journal article" date="2001" name="Nature">
        <title>Complete genome sequence of Salmonella enterica serovar Typhimurium LT2.</title>
        <authorList>
            <person name="McClelland M."/>
            <person name="Sanderson K.E."/>
            <person name="Spieth J."/>
            <person name="Clifton S.W."/>
            <person name="Latreille P."/>
            <person name="Courtney L."/>
            <person name="Porwollik S."/>
            <person name="Ali J."/>
            <person name="Dante M."/>
            <person name="Du F."/>
            <person name="Hou S."/>
            <person name="Layman D."/>
            <person name="Leonard S."/>
            <person name="Nguyen C."/>
            <person name="Scott K."/>
            <person name="Holmes A."/>
            <person name="Grewal N."/>
            <person name="Mulvaney E."/>
            <person name="Ryan E."/>
            <person name="Sun H."/>
            <person name="Florea L."/>
            <person name="Miller W."/>
            <person name="Stoneking T."/>
            <person name="Nhan M."/>
            <person name="Waterston R."/>
            <person name="Wilson R.K."/>
        </authorList>
    </citation>
    <scope>NUCLEOTIDE SEQUENCE [LARGE SCALE GENOMIC DNA]</scope>
    <source>
        <strain>LT2 / SGSC1412 / ATCC 700720</strain>
    </source>
</reference>
<reference key="3">
    <citation type="journal article" date="1995" name="J. Bacteriol.">
        <title>Sequence analysis of the phs operon in Salmonella typhimurium and the contribution of thiosulfate reduction to anaerobic energy metabolism.</title>
        <authorList>
            <person name="Heinzinger N.K."/>
            <person name="Fujimoto S.Y."/>
            <person name="Clark M.A."/>
            <person name="Moreno M.S."/>
            <person name="Barrett E.L."/>
        </authorList>
    </citation>
    <scope>NUCLEOTIDE SEQUENCE [GENOMIC DNA] OF 1-255</scope>
    <source>
        <strain>LT2</strain>
    </source>
</reference>
<protein>
    <recommendedName>
        <fullName>D-alanyl-D-alanine carboxypeptidase DacD</fullName>
        <shortName>DD-carboxypeptidase</shortName>
        <shortName>DD-peptidase</shortName>
        <ecNumber>3.4.16.4</ecNumber>
    </recommendedName>
    <alternativeName>
        <fullName>Penicillin-binding protein 6B</fullName>
        <shortName>PBP-6B</shortName>
    </alternativeName>
</protein>
<accession>P37604</accession>
<accession>P37605</accession>
<organism>
    <name type="scientific">Salmonella typhimurium (strain LT2 / SGSC1412 / ATCC 700720)</name>
    <dbReference type="NCBI Taxonomy" id="99287"/>
    <lineage>
        <taxon>Bacteria</taxon>
        <taxon>Pseudomonadati</taxon>
        <taxon>Pseudomonadota</taxon>
        <taxon>Gammaproteobacteria</taxon>
        <taxon>Enterobacterales</taxon>
        <taxon>Enterobacteriaceae</taxon>
        <taxon>Salmonella</taxon>
    </lineage>
</organism>
<name>DACD_SALTY</name>
<evidence type="ECO:0000250" key="1"/>
<evidence type="ECO:0000255" key="2"/>
<evidence type="ECO:0000305" key="3"/>
<comment type="function">
    <text>Removes C-terminal D-alanyl residues from sugar-peptide cell wall precursors.</text>
</comment>
<comment type="catalytic activity">
    <reaction>
        <text>Preferential cleavage: (Ac)2-L-Lys-D-Ala-|-D-Ala. Also transpeptidation of peptidyl-alanyl moieties that are N-acyl substituents of D-alanine.</text>
        <dbReference type="EC" id="3.4.16.4"/>
    </reaction>
</comment>
<comment type="pathway">
    <text>Cell wall biogenesis; peptidoglycan biosynthesis.</text>
</comment>
<comment type="subcellular location">
    <subcellularLocation>
        <location evidence="3">Cell inner membrane</location>
        <topology evidence="3">Peripheral membrane protein</topology>
    </subcellularLocation>
    <text evidence="3">N-terminal lies in the periplasmic space.</text>
</comment>
<comment type="similarity">
    <text evidence="3">Belongs to the peptidase S11 family.</text>
</comment>
<comment type="sequence caution" evidence="3">
    <conflict type="frameshift">
        <sequence resource="EMBL-CDS" id="AAA68435"/>
    </conflict>
</comment>
<comment type="sequence caution" evidence="3">
    <conflict type="erroneous initiation">
        <sequence resource="EMBL-CDS" id="AAA68436"/>
    </conflict>
</comment>
<sequence>MLLKRRLFIAASLFAMHLSPALAADAVSFAPQPPAIDAGAWVLMDYTTGQVLTAGNEHQQRNPASLTKLMTGYVVDRAIDSHRISPDDIVTVGRDAWAKDNPVFVGSSLMFLKEGDRVSVRDLSRGLIVDSGNDACVALADYIAGGQPQFVAMMNSYVKKLNLQDTHFETVHGLDAPGQHSSAYDLAVLSRAIIHGEPEFYHMYSEKSLTWNGITQQNRNGLLWDKTMHIDGLKTGHTSGAGFNLIASAVDGQRRLIAVVMGAKSSKGREEQARKLLQWGQQNFATVQILHSGKKVGSERIWYGDKEKIALGTEQDFWMALPKAEIPHIKAKYVLDRKELEAPIAAHQQVGEIELYDRDKLIAQWPLVTLESVGKGGMFSRLSDYFQHKA</sequence>
<dbReference type="EC" id="3.4.16.4"/>
<dbReference type="EMBL" id="L31538">
    <property type="protein sequence ID" value="AAA68435.1"/>
    <property type="status" value="ALT_FRAME"/>
    <property type="molecule type" value="Genomic_DNA"/>
</dbReference>
<dbReference type="EMBL" id="L31538">
    <property type="protein sequence ID" value="AAA68436.1"/>
    <property type="status" value="ALT_INIT"/>
    <property type="molecule type" value="Genomic_DNA"/>
</dbReference>
<dbReference type="EMBL" id="AE006468">
    <property type="protein sequence ID" value="AAL20966.1"/>
    <property type="molecule type" value="Genomic_DNA"/>
</dbReference>
<dbReference type="EMBL" id="L32188">
    <property type="protein sequence ID" value="AAC36937.1"/>
    <property type="molecule type" value="Genomic_DNA"/>
</dbReference>
<dbReference type="PIR" id="D57143">
    <property type="entry name" value="D57143"/>
</dbReference>
<dbReference type="RefSeq" id="NP_461007.1">
    <property type="nucleotide sequence ID" value="NC_003197.2"/>
</dbReference>
<dbReference type="RefSeq" id="WP_000925042.1">
    <property type="nucleotide sequence ID" value="NC_003197.2"/>
</dbReference>
<dbReference type="SMR" id="P37604"/>
<dbReference type="STRING" id="99287.STM2062"/>
<dbReference type="MEROPS" id="S11.009"/>
<dbReference type="PaxDb" id="99287-STM2062"/>
<dbReference type="GeneID" id="1253583"/>
<dbReference type="KEGG" id="stm:STM2062"/>
<dbReference type="PATRIC" id="fig|99287.12.peg.2184"/>
<dbReference type="HOGENOM" id="CLU_027070_8_1_6"/>
<dbReference type="OMA" id="IQAGSWV"/>
<dbReference type="PhylomeDB" id="P37604"/>
<dbReference type="BioCyc" id="SENT99287:STM2062-MONOMER"/>
<dbReference type="UniPathway" id="UPA00219"/>
<dbReference type="Proteomes" id="UP000001014">
    <property type="component" value="Chromosome"/>
</dbReference>
<dbReference type="GO" id="GO:0005886">
    <property type="term" value="C:plasma membrane"/>
    <property type="evidence" value="ECO:0007669"/>
    <property type="project" value="UniProtKB-SubCell"/>
</dbReference>
<dbReference type="GO" id="GO:0009002">
    <property type="term" value="F:serine-type D-Ala-D-Ala carboxypeptidase activity"/>
    <property type="evidence" value="ECO:0007669"/>
    <property type="project" value="UniProtKB-EC"/>
</dbReference>
<dbReference type="GO" id="GO:0071555">
    <property type="term" value="P:cell wall organization"/>
    <property type="evidence" value="ECO:0007669"/>
    <property type="project" value="UniProtKB-KW"/>
</dbReference>
<dbReference type="GO" id="GO:0009252">
    <property type="term" value="P:peptidoglycan biosynthetic process"/>
    <property type="evidence" value="ECO:0007669"/>
    <property type="project" value="UniProtKB-UniPathway"/>
</dbReference>
<dbReference type="GO" id="GO:0006508">
    <property type="term" value="P:proteolysis"/>
    <property type="evidence" value="ECO:0007669"/>
    <property type="project" value="UniProtKB-KW"/>
</dbReference>
<dbReference type="GO" id="GO:0008360">
    <property type="term" value="P:regulation of cell shape"/>
    <property type="evidence" value="ECO:0007669"/>
    <property type="project" value="UniProtKB-KW"/>
</dbReference>
<dbReference type="FunFam" id="2.60.410.10:FF:000002">
    <property type="entry name" value="D-alanyl-D-alanine carboxypeptidase dacD"/>
    <property type="match status" value="1"/>
</dbReference>
<dbReference type="FunFam" id="3.40.710.10:FF:000001">
    <property type="entry name" value="D-alanyl-D-alanine serine-type carboxypeptidase"/>
    <property type="match status" value="1"/>
</dbReference>
<dbReference type="Gene3D" id="2.60.410.10">
    <property type="entry name" value="D-Ala-D-Ala carboxypeptidase, C-terminal domain"/>
    <property type="match status" value="1"/>
</dbReference>
<dbReference type="Gene3D" id="3.40.710.10">
    <property type="entry name" value="DD-peptidase/beta-lactamase superfamily"/>
    <property type="match status" value="1"/>
</dbReference>
<dbReference type="InterPro" id="IPR012338">
    <property type="entry name" value="Beta-lactam/transpept-like"/>
</dbReference>
<dbReference type="InterPro" id="IPR015956">
    <property type="entry name" value="Peniciliin-bd_prot_C_sf"/>
</dbReference>
<dbReference type="InterPro" id="IPR018044">
    <property type="entry name" value="Peptidase_S11"/>
</dbReference>
<dbReference type="InterPro" id="IPR012907">
    <property type="entry name" value="Peptidase_S11_C"/>
</dbReference>
<dbReference type="InterPro" id="IPR037167">
    <property type="entry name" value="Peptidase_S11_C_sf"/>
</dbReference>
<dbReference type="InterPro" id="IPR001967">
    <property type="entry name" value="Peptidase_S11_N"/>
</dbReference>
<dbReference type="NCBIfam" id="NF008489">
    <property type="entry name" value="PRK11397.1"/>
    <property type="match status" value="1"/>
</dbReference>
<dbReference type="PANTHER" id="PTHR21581">
    <property type="entry name" value="D-ALANYL-D-ALANINE CARBOXYPEPTIDASE"/>
    <property type="match status" value="1"/>
</dbReference>
<dbReference type="PANTHER" id="PTHR21581:SF5">
    <property type="entry name" value="D-ALANYL-D-ALANINE CARBOXYPEPTIDASE DACD"/>
    <property type="match status" value="1"/>
</dbReference>
<dbReference type="Pfam" id="PF07943">
    <property type="entry name" value="PBP5_C"/>
    <property type="match status" value="1"/>
</dbReference>
<dbReference type="Pfam" id="PF00768">
    <property type="entry name" value="Peptidase_S11"/>
    <property type="match status" value="1"/>
</dbReference>
<dbReference type="PRINTS" id="PR00725">
    <property type="entry name" value="DADACBPTASE1"/>
</dbReference>
<dbReference type="SMART" id="SM00936">
    <property type="entry name" value="PBP5_C"/>
    <property type="match status" value="1"/>
</dbReference>
<dbReference type="SUPFAM" id="SSF56601">
    <property type="entry name" value="beta-lactamase/transpeptidase-like"/>
    <property type="match status" value="1"/>
</dbReference>
<dbReference type="SUPFAM" id="SSF69189">
    <property type="entry name" value="Penicillin-binding protein associated domain"/>
    <property type="match status" value="1"/>
</dbReference>